<proteinExistence type="inferred from homology"/>
<organism>
    <name type="scientific">Rhodopseudomonas palustris (strain BisA53)</name>
    <dbReference type="NCBI Taxonomy" id="316055"/>
    <lineage>
        <taxon>Bacteria</taxon>
        <taxon>Pseudomonadati</taxon>
        <taxon>Pseudomonadota</taxon>
        <taxon>Alphaproteobacteria</taxon>
        <taxon>Hyphomicrobiales</taxon>
        <taxon>Nitrobacteraceae</taxon>
        <taxon>Rhodopseudomonas</taxon>
    </lineage>
</organism>
<keyword id="KW-0067">ATP-binding</keyword>
<keyword id="KW-0238">DNA-binding</keyword>
<keyword id="KW-0479">Metal-binding</keyword>
<keyword id="KW-0547">Nucleotide-binding</keyword>
<keyword id="KW-0678">Repressor</keyword>
<keyword id="KW-0804">Transcription</keyword>
<keyword id="KW-0805">Transcription regulation</keyword>
<keyword id="KW-0862">Zinc</keyword>
<keyword id="KW-0863">Zinc-finger</keyword>
<accession>Q07MT8</accession>
<feature type="chain" id="PRO_1000080810" description="Transcriptional repressor NrdR">
    <location>
        <begin position="1"/>
        <end position="160"/>
    </location>
</feature>
<feature type="domain" description="ATP-cone" evidence="1">
    <location>
        <begin position="49"/>
        <end position="139"/>
    </location>
</feature>
<feature type="zinc finger region" evidence="1">
    <location>
        <begin position="3"/>
        <end position="34"/>
    </location>
</feature>
<feature type="region of interest" description="Disordered" evidence="2">
    <location>
        <begin position="1"/>
        <end position="20"/>
    </location>
</feature>
<feature type="compositionally biased region" description="Polar residues" evidence="2">
    <location>
        <begin position="1"/>
        <end position="11"/>
    </location>
</feature>
<gene>
    <name evidence="1" type="primary">nrdR</name>
    <name type="ordered locus">RPE_2809</name>
</gene>
<dbReference type="EMBL" id="CP000463">
    <property type="protein sequence ID" value="ABJ06746.1"/>
    <property type="molecule type" value="Genomic_DNA"/>
</dbReference>
<dbReference type="SMR" id="Q07MT8"/>
<dbReference type="STRING" id="316055.RPE_2809"/>
<dbReference type="KEGG" id="rpe:RPE_2809"/>
<dbReference type="eggNOG" id="COG1327">
    <property type="taxonomic scope" value="Bacteria"/>
</dbReference>
<dbReference type="HOGENOM" id="CLU_108412_0_1_5"/>
<dbReference type="OrthoDB" id="9807461at2"/>
<dbReference type="GO" id="GO:0005524">
    <property type="term" value="F:ATP binding"/>
    <property type="evidence" value="ECO:0007669"/>
    <property type="project" value="UniProtKB-KW"/>
</dbReference>
<dbReference type="GO" id="GO:0003677">
    <property type="term" value="F:DNA binding"/>
    <property type="evidence" value="ECO:0007669"/>
    <property type="project" value="UniProtKB-KW"/>
</dbReference>
<dbReference type="GO" id="GO:0008270">
    <property type="term" value="F:zinc ion binding"/>
    <property type="evidence" value="ECO:0007669"/>
    <property type="project" value="UniProtKB-UniRule"/>
</dbReference>
<dbReference type="GO" id="GO:0045892">
    <property type="term" value="P:negative regulation of DNA-templated transcription"/>
    <property type="evidence" value="ECO:0007669"/>
    <property type="project" value="UniProtKB-UniRule"/>
</dbReference>
<dbReference type="HAMAP" id="MF_00440">
    <property type="entry name" value="NrdR"/>
    <property type="match status" value="1"/>
</dbReference>
<dbReference type="InterPro" id="IPR005144">
    <property type="entry name" value="ATP-cone_dom"/>
</dbReference>
<dbReference type="InterPro" id="IPR055173">
    <property type="entry name" value="NrdR-like_N"/>
</dbReference>
<dbReference type="InterPro" id="IPR003796">
    <property type="entry name" value="RNR_NrdR-like"/>
</dbReference>
<dbReference type="NCBIfam" id="TIGR00244">
    <property type="entry name" value="transcriptional regulator NrdR"/>
    <property type="match status" value="1"/>
</dbReference>
<dbReference type="PANTHER" id="PTHR30455">
    <property type="entry name" value="TRANSCRIPTIONAL REPRESSOR NRDR"/>
    <property type="match status" value="1"/>
</dbReference>
<dbReference type="PANTHER" id="PTHR30455:SF2">
    <property type="entry name" value="TRANSCRIPTIONAL REPRESSOR NRDR"/>
    <property type="match status" value="1"/>
</dbReference>
<dbReference type="Pfam" id="PF03477">
    <property type="entry name" value="ATP-cone"/>
    <property type="match status" value="1"/>
</dbReference>
<dbReference type="Pfam" id="PF22811">
    <property type="entry name" value="Zn_ribbon_NrdR"/>
    <property type="match status" value="1"/>
</dbReference>
<dbReference type="PROSITE" id="PS51161">
    <property type="entry name" value="ATP_CONE"/>
    <property type="match status" value="1"/>
</dbReference>
<reference key="1">
    <citation type="submission" date="2006-09" db="EMBL/GenBank/DDBJ databases">
        <title>Complete sequence of Rhodopseudomonas palustris BisA53.</title>
        <authorList>
            <consortium name="US DOE Joint Genome Institute"/>
            <person name="Copeland A."/>
            <person name="Lucas S."/>
            <person name="Lapidus A."/>
            <person name="Barry K."/>
            <person name="Detter J.C."/>
            <person name="Glavina del Rio T."/>
            <person name="Hammon N."/>
            <person name="Israni S."/>
            <person name="Dalin E."/>
            <person name="Tice H."/>
            <person name="Pitluck S."/>
            <person name="Chain P."/>
            <person name="Malfatti S."/>
            <person name="Shin M."/>
            <person name="Vergez L."/>
            <person name="Schmutz J."/>
            <person name="Larimer F."/>
            <person name="Land M."/>
            <person name="Hauser L."/>
            <person name="Pelletier D.A."/>
            <person name="Kyrpides N."/>
            <person name="Kim E."/>
            <person name="Harwood C.S."/>
            <person name="Oda Y."/>
            <person name="Richardson P."/>
        </authorList>
    </citation>
    <scope>NUCLEOTIDE SEQUENCE [LARGE SCALE GENOMIC DNA]</scope>
    <source>
        <strain>BisA53</strain>
    </source>
</reference>
<name>NRDR_RHOP5</name>
<protein>
    <recommendedName>
        <fullName evidence="1">Transcriptional repressor NrdR</fullName>
    </recommendedName>
</protein>
<sequence length="160" mass="18492">MRCPSCSSLDTQVKDSRPTEDSSVIRRRRVCLACNFRFTTFERVQLRELTVIKRNGRRVPFDRDKLVRSLQISLRKRPVDPERLEEMVSAVVRELESGGESEISSEAIGEIVMEHLRKLDDVAYVRFASVYRNFREAKDFEAVLGELSSDELARAALLRK</sequence>
<comment type="function">
    <text evidence="1">Negatively regulates transcription of bacterial ribonucleotide reductase nrd genes and operons by binding to NrdR-boxes.</text>
</comment>
<comment type="cofactor">
    <cofactor evidence="1">
        <name>Zn(2+)</name>
        <dbReference type="ChEBI" id="CHEBI:29105"/>
    </cofactor>
    <text evidence="1">Binds 1 zinc ion.</text>
</comment>
<comment type="similarity">
    <text evidence="1">Belongs to the NrdR family.</text>
</comment>
<evidence type="ECO:0000255" key="1">
    <source>
        <dbReference type="HAMAP-Rule" id="MF_00440"/>
    </source>
</evidence>
<evidence type="ECO:0000256" key="2">
    <source>
        <dbReference type="SAM" id="MobiDB-lite"/>
    </source>
</evidence>